<accession>O07045</accession>
<protein>
    <recommendedName>
        <fullName>Cysteine--tRNA ligase</fullName>
        <ecNumber>6.1.1.16</ecNumber>
    </recommendedName>
    <alternativeName>
        <fullName>Cysteinyl-tRNA synthetase</fullName>
        <shortName>CysRS</shortName>
    </alternativeName>
</protein>
<proteinExistence type="inferred from homology"/>
<comment type="catalytic activity">
    <reaction>
        <text>tRNA(Cys) + L-cysteine + ATP = L-cysteinyl-tRNA(Cys) + AMP + diphosphate</text>
        <dbReference type="Rhea" id="RHEA:17773"/>
        <dbReference type="Rhea" id="RHEA-COMP:9661"/>
        <dbReference type="Rhea" id="RHEA-COMP:9679"/>
        <dbReference type="ChEBI" id="CHEBI:30616"/>
        <dbReference type="ChEBI" id="CHEBI:33019"/>
        <dbReference type="ChEBI" id="CHEBI:35235"/>
        <dbReference type="ChEBI" id="CHEBI:78442"/>
        <dbReference type="ChEBI" id="CHEBI:78517"/>
        <dbReference type="ChEBI" id="CHEBI:456215"/>
        <dbReference type="EC" id="6.1.1.16"/>
    </reaction>
</comment>
<comment type="cofactor">
    <cofactor evidence="1">
        <name>Zn(2+)</name>
        <dbReference type="ChEBI" id="CHEBI:29105"/>
    </cofactor>
    <text evidence="1">Binds 1 zinc ion per subunit.</text>
</comment>
<comment type="subunit">
    <text evidence="1">Monomer.</text>
</comment>
<comment type="subcellular location">
    <subcellularLocation>
        <location evidence="1">Cytoplasm</location>
    </subcellularLocation>
</comment>
<comment type="similarity">
    <text evidence="3">Belongs to the class-I aminoacyl-tRNA synthetase family.</text>
</comment>
<evidence type="ECO:0000250" key="1"/>
<evidence type="ECO:0000256" key="2">
    <source>
        <dbReference type="SAM" id="MobiDB-lite"/>
    </source>
</evidence>
<evidence type="ECO:0000305" key="3"/>
<dbReference type="EC" id="6.1.1.16"/>
<dbReference type="EMBL" id="X99587">
    <property type="protein sequence ID" value="CAA67901.1"/>
    <property type="status" value="ALT_FRAME"/>
    <property type="molecule type" value="Genomic_DNA"/>
</dbReference>
<dbReference type="SMR" id="O07045"/>
<dbReference type="GO" id="GO:0005829">
    <property type="term" value="C:cytosol"/>
    <property type="evidence" value="ECO:0007669"/>
    <property type="project" value="TreeGrafter"/>
</dbReference>
<dbReference type="GO" id="GO:0005524">
    <property type="term" value="F:ATP binding"/>
    <property type="evidence" value="ECO:0007669"/>
    <property type="project" value="UniProtKB-UniRule"/>
</dbReference>
<dbReference type="GO" id="GO:0004817">
    <property type="term" value="F:cysteine-tRNA ligase activity"/>
    <property type="evidence" value="ECO:0007669"/>
    <property type="project" value="UniProtKB-UniRule"/>
</dbReference>
<dbReference type="GO" id="GO:0046872">
    <property type="term" value="F:metal ion binding"/>
    <property type="evidence" value="ECO:0007669"/>
    <property type="project" value="UniProtKB-KW"/>
</dbReference>
<dbReference type="GO" id="GO:0006423">
    <property type="term" value="P:cysteinyl-tRNA aminoacylation"/>
    <property type="evidence" value="ECO:0007669"/>
    <property type="project" value="UniProtKB-UniRule"/>
</dbReference>
<dbReference type="Gene3D" id="1.20.120.1910">
    <property type="entry name" value="Cysteine-tRNA ligase, C-terminal anti-codon recognition domain"/>
    <property type="match status" value="1"/>
</dbReference>
<dbReference type="Gene3D" id="3.40.50.620">
    <property type="entry name" value="HUPs"/>
    <property type="match status" value="1"/>
</dbReference>
<dbReference type="HAMAP" id="MF_00041">
    <property type="entry name" value="Cys_tRNA_synth"/>
    <property type="match status" value="1"/>
</dbReference>
<dbReference type="InterPro" id="IPR015803">
    <property type="entry name" value="Cys-tRNA-ligase"/>
</dbReference>
<dbReference type="InterPro" id="IPR015273">
    <property type="entry name" value="Cys-tRNA-synt_Ia_DALR"/>
</dbReference>
<dbReference type="InterPro" id="IPR024909">
    <property type="entry name" value="Cys-tRNA/MSH_ligase"/>
</dbReference>
<dbReference type="InterPro" id="IPR056411">
    <property type="entry name" value="CysS_C"/>
</dbReference>
<dbReference type="InterPro" id="IPR014729">
    <property type="entry name" value="Rossmann-like_a/b/a_fold"/>
</dbReference>
<dbReference type="InterPro" id="IPR032678">
    <property type="entry name" value="tRNA-synt_1_cat_dom"/>
</dbReference>
<dbReference type="InterPro" id="IPR009080">
    <property type="entry name" value="tRNAsynth_Ia_anticodon-bd"/>
</dbReference>
<dbReference type="PANTHER" id="PTHR10890:SF3">
    <property type="entry name" value="CYSTEINE--TRNA LIGASE, CYTOPLASMIC"/>
    <property type="match status" value="1"/>
</dbReference>
<dbReference type="PANTHER" id="PTHR10890">
    <property type="entry name" value="CYSTEINYL-TRNA SYNTHETASE"/>
    <property type="match status" value="1"/>
</dbReference>
<dbReference type="Pfam" id="PF23493">
    <property type="entry name" value="CysS_C"/>
    <property type="match status" value="1"/>
</dbReference>
<dbReference type="Pfam" id="PF09190">
    <property type="entry name" value="DALR_2"/>
    <property type="match status" value="1"/>
</dbReference>
<dbReference type="Pfam" id="PF01406">
    <property type="entry name" value="tRNA-synt_1e"/>
    <property type="match status" value="1"/>
</dbReference>
<dbReference type="PRINTS" id="PR00983">
    <property type="entry name" value="TRNASYNTHCYS"/>
</dbReference>
<dbReference type="SMART" id="SM00840">
    <property type="entry name" value="DALR_2"/>
    <property type="match status" value="1"/>
</dbReference>
<dbReference type="SUPFAM" id="SSF47323">
    <property type="entry name" value="Anticodon-binding domain of a subclass of class I aminoacyl-tRNA synthetases"/>
    <property type="match status" value="1"/>
</dbReference>
<dbReference type="SUPFAM" id="SSF52374">
    <property type="entry name" value="Nucleotidylyl transferase"/>
    <property type="match status" value="1"/>
</dbReference>
<gene>
    <name type="primary">cysS</name>
</gene>
<reference key="1">
    <citation type="journal article" date="1998" name="Curr. Microbiol.">
        <title>Identification and isolation of the indole-3-pyruvate decarboxylase gene from Azospirillum brasilense Sp7: sequencing and functional analysis of the gene locus.</title>
        <authorList>
            <person name="Zimmer W."/>
            <person name="Wesche M."/>
            <person name="Timmermans L."/>
        </authorList>
    </citation>
    <scope>NUCLEOTIDE SEQUENCE [GENOMIC DNA]</scope>
    <source>
        <strain>ATCC 29145 / DSM 1690 / IMET 11303 / Sp7</strain>
    </source>
</reference>
<reference key="2">
    <citation type="unpublished observations" date="1998-04">
        <authorList>
            <person name="Bairoch A."/>
        </authorList>
    </citation>
    <scope>IDENTIFICATION OF PROBABLE FRAMESHIFT</scope>
</reference>
<keyword id="KW-0030">Aminoacyl-tRNA synthetase</keyword>
<keyword id="KW-0067">ATP-binding</keyword>
<keyword id="KW-0963">Cytoplasm</keyword>
<keyword id="KW-0436">Ligase</keyword>
<keyword id="KW-0479">Metal-binding</keyword>
<keyword id="KW-0547">Nucleotide-binding</keyword>
<keyword id="KW-0648">Protein biosynthesis</keyword>
<keyword id="KW-0862">Zinc</keyword>
<feature type="chain" id="PRO_0000159341" description="Cysteine--tRNA ligase">
    <location>
        <begin position="1"/>
        <end position="448"/>
    </location>
</feature>
<feature type="region of interest" description="Disordered" evidence="2">
    <location>
        <begin position="79"/>
        <end position="106"/>
    </location>
</feature>
<feature type="short sequence motif" description="'HIGH' region">
    <location>
        <begin position="31"/>
        <end position="41"/>
    </location>
</feature>
<feature type="short sequence motif" description="'KMSKS' region">
    <location>
        <begin position="265"/>
        <end position="269"/>
    </location>
</feature>
<feature type="compositionally biased region" description="Basic and acidic residues" evidence="2">
    <location>
        <begin position="79"/>
        <end position="91"/>
    </location>
</feature>
<feature type="binding site" evidence="1">
    <location>
        <position position="29"/>
    </location>
    <ligand>
        <name>Zn(2+)</name>
        <dbReference type="ChEBI" id="CHEBI:29105"/>
    </ligand>
</feature>
<feature type="binding site" evidence="1">
    <location>
        <position position="206"/>
    </location>
    <ligand>
        <name>Zn(2+)</name>
        <dbReference type="ChEBI" id="CHEBI:29105"/>
    </ligand>
</feature>
<feature type="binding site" evidence="1">
    <location>
        <position position="235"/>
    </location>
    <ligand>
        <name>Zn(2+)</name>
        <dbReference type="ChEBI" id="CHEBI:29105"/>
    </ligand>
</feature>
<feature type="binding site" evidence="1">
    <location>
        <position position="268"/>
    </location>
    <ligand>
        <name>ATP</name>
        <dbReference type="ChEBI" id="CHEBI:30616"/>
    </ligand>
</feature>
<feature type="sequence conflict" description="In Ref. 1; CAA67901." evidence="3" ref="1">
    <original>EPLARYWVHQRLRDRRGARRMSKSLGNLLHR</original>
    <variation>SRWPATGSTNGFVTVEGREGCPSRWATFFTG</variation>
    <location>
        <begin position="246"/>
        <end position="276"/>
    </location>
</feature>
<name>SYC_AZOBR</name>
<sequence length="448" mass="49574">MPLDLYNTLTRRKERFEPMTPDRVGMYVCGPTVYDTAHIGNARPVVFDLLFRLLRRLYPAVTYVRNITASDDKIIDRRATTGADRGADQAHRGPLPRRHGPLNAAPTIEPRATHHISHMVALIGLLIEPATPTPRKGTCCSPCRRWRSTGQLSRRSLDEMIAGARVEVAPYKRDSSDFVLWKPSTDGQPGWDSPWGRGRPGWHIECSAMAKEHLGVTFDIHGGGLDLILPDHENEIAQSRCAHAGEPLARYWVHQRLRDRRGARRMSKSLGNLLHRGTSCWTEFPGGGHPLGVRPYRSRGLPEAEESKATLDRWYQALRGDPAPAQAELPFDVLAALEDDLNSPLAISHLHELASAVNKATGEAEKAAAKGRCRSAERWAAPETRSVVPLGAEGAAALSDADIQQRIEDRSAARKAKNYAEADRIRKELADLGIVLEDGPQGTTWKRA</sequence>
<organism>
    <name type="scientific">Azospirillum brasilense</name>
    <dbReference type="NCBI Taxonomy" id="192"/>
    <lineage>
        <taxon>Bacteria</taxon>
        <taxon>Pseudomonadati</taxon>
        <taxon>Pseudomonadota</taxon>
        <taxon>Alphaproteobacteria</taxon>
        <taxon>Rhodospirillales</taxon>
        <taxon>Azospirillaceae</taxon>
        <taxon>Azospirillum</taxon>
    </lineage>
</organism>